<accession>Q61334</accession>
<name>BAP29_MOUSE</name>
<feature type="chain" id="PRO_0000142889" description="B-cell receptor-associated protein 29">
    <location>
        <begin position="1"/>
        <end position="240"/>
    </location>
</feature>
<feature type="topological domain" description="Lumenal" evidence="2">
    <location>
        <begin position="1"/>
        <end position="6"/>
    </location>
</feature>
<feature type="transmembrane region" description="Helical" evidence="2">
    <location>
        <begin position="7"/>
        <end position="27"/>
    </location>
</feature>
<feature type="topological domain" description="Cytoplasmic" evidence="2">
    <location>
        <begin position="28"/>
        <end position="43"/>
    </location>
</feature>
<feature type="transmembrane region" description="Helical" evidence="2">
    <location>
        <begin position="44"/>
        <end position="64"/>
    </location>
</feature>
<feature type="topological domain" description="Lumenal" evidence="2">
    <location>
        <begin position="65"/>
        <end position="103"/>
    </location>
</feature>
<feature type="transmembrane region" description="Helical" evidence="2">
    <location>
        <begin position="104"/>
        <end position="124"/>
    </location>
</feature>
<feature type="topological domain" description="Cytoplasmic" evidence="2">
    <location>
        <begin position="125"/>
        <end position="240"/>
    </location>
</feature>
<feature type="coiled-coil region" evidence="1">
    <location>
        <begin position="166"/>
        <end position="232"/>
    </location>
</feature>
<feature type="short sequence motif" description="Di-lysine motif">
    <location>
        <begin position="237"/>
        <end position="240"/>
    </location>
</feature>
<keyword id="KW-0053">Apoptosis</keyword>
<keyword id="KW-0175">Coiled coil</keyword>
<keyword id="KW-0903">Direct protein sequencing</keyword>
<keyword id="KW-0256">Endoplasmic reticulum</keyword>
<keyword id="KW-0931">ER-Golgi transport</keyword>
<keyword id="KW-0472">Membrane</keyword>
<keyword id="KW-0653">Protein transport</keyword>
<keyword id="KW-1185">Reference proteome</keyword>
<keyword id="KW-0812">Transmembrane</keyword>
<keyword id="KW-1133">Transmembrane helix</keyword>
<keyword id="KW-0813">Transport</keyword>
<reference key="1">
    <citation type="journal article" date="1994" name="EMBO J.">
        <title>Two new proteins preferentially associated with membrane immunoglobulin D.</title>
        <authorList>
            <person name="Kim K.-M."/>
            <person name="Adachi T."/>
            <person name="Nielsen P.J."/>
            <person name="Terashima M."/>
            <person name="Lamers M.C."/>
            <person name="Koehler G."/>
            <person name="Reth M."/>
        </authorList>
    </citation>
    <scope>NUCLEOTIDE SEQUENCE [MRNA]</scope>
    <scope>PROTEIN SEQUENCE OF 150-157; 160-177; 179-183; 201-205; 209-216 AND 217-223</scope>
    <scope>INTERACTION WITH BCAP31 AND IGD</scope>
    <source>
        <strain>NIH Swiss</strain>
        <tissue>Lymphoid tissue</tissue>
    </source>
</reference>
<reference key="2">
    <citation type="journal article" date="2004" name="Genome Res.">
        <title>The status, quality, and expansion of the NIH full-length cDNA project: the Mammalian Gene Collection (MGC).</title>
        <authorList>
            <consortium name="The MGC Project Team"/>
        </authorList>
    </citation>
    <scope>NUCLEOTIDE SEQUENCE [LARGE SCALE MRNA]</scope>
    <source>
        <tissue>Mammary tumor</tissue>
    </source>
</reference>
<reference key="3">
    <citation type="journal article" date="2010" name="Cell">
        <title>A tissue-specific atlas of mouse protein phosphorylation and expression.</title>
        <authorList>
            <person name="Huttlin E.L."/>
            <person name="Jedrychowski M.P."/>
            <person name="Elias J.E."/>
            <person name="Goswami T."/>
            <person name="Rad R."/>
            <person name="Beausoleil S.A."/>
            <person name="Villen J."/>
            <person name="Haas W."/>
            <person name="Sowa M.E."/>
            <person name="Gygi S.P."/>
        </authorList>
    </citation>
    <scope>IDENTIFICATION BY MASS SPECTROMETRY [LARGE SCALE ANALYSIS]</scope>
    <source>
        <tissue>Brain</tissue>
        <tissue>Heart</tissue>
        <tissue>Lung</tissue>
        <tissue>Testis</tissue>
    </source>
</reference>
<evidence type="ECO:0000250" key="1"/>
<evidence type="ECO:0000255" key="2"/>
<evidence type="ECO:0000305" key="3"/>
<proteinExistence type="evidence at protein level"/>
<protein>
    <recommendedName>
        <fullName>B-cell receptor-associated protein 29</fullName>
        <shortName>BCR-associated protein 29</shortName>
        <shortName>Bap29</shortName>
    </recommendedName>
</protein>
<organism>
    <name type="scientific">Mus musculus</name>
    <name type="common">Mouse</name>
    <dbReference type="NCBI Taxonomy" id="10090"/>
    <lineage>
        <taxon>Eukaryota</taxon>
        <taxon>Metazoa</taxon>
        <taxon>Chordata</taxon>
        <taxon>Craniata</taxon>
        <taxon>Vertebrata</taxon>
        <taxon>Euteleostomi</taxon>
        <taxon>Mammalia</taxon>
        <taxon>Eutheria</taxon>
        <taxon>Euarchontoglires</taxon>
        <taxon>Glires</taxon>
        <taxon>Rodentia</taxon>
        <taxon>Myomorpha</taxon>
        <taxon>Muroidea</taxon>
        <taxon>Muridae</taxon>
        <taxon>Murinae</taxon>
        <taxon>Mus</taxon>
        <taxon>Mus</taxon>
    </lineage>
</organism>
<comment type="function">
    <text evidence="1">May play a role in anterograde transport of membrane proteins from the endoplasmic reticulum to the Golgi. May be involved in CASP8-mediated apoptosis (By similarity).</text>
</comment>
<comment type="subunit">
    <text evidence="1">Homodimer and heterodimer with BCAP31. Binds CASP8 as a complex containing BCAP31, BCAP29, BCL2 and/or BCL2L1. Interacts with VAMP3, VAMP1 and membrane IgD immunoglobulins. May interact with ACTG1 and non-muscle myosin II (By similarity).</text>
</comment>
<comment type="subcellular location">
    <subcellularLocation>
        <location>Endoplasmic reticulum membrane</location>
        <topology>Multi-pass membrane protein</topology>
    </subcellularLocation>
</comment>
<comment type="tissue specificity">
    <text>Highly expressed in brain and testis; detected at lower levels in thymus, spleen, liver, lung and bone marrow.</text>
</comment>
<comment type="similarity">
    <text evidence="3">Belongs to the BCAP29/BCAP31 family.</text>
</comment>
<dbReference type="EMBL" id="X78684">
    <property type="protein sequence ID" value="CAA55351.1"/>
    <property type="molecule type" value="mRNA"/>
</dbReference>
<dbReference type="EMBL" id="BC003303">
    <property type="protein sequence ID" value="AAH03303.1"/>
    <property type="molecule type" value="mRNA"/>
</dbReference>
<dbReference type="EMBL" id="BC021661">
    <property type="protein sequence ID" value="AAH21661.1"/>
    <property type="molecule type" value="mRNA"/>
</dbReference>
<dbReference type="CCDS" id="CCDS25864.1"/>
<dbReference type="PIR" id="S46997">
    <property type="entry name" value="S46997"/>
</dbReference>
<dbReference type="RefSeq" id="NP_001157562.1">
    <property type="nucleotide sequence ID" value="NM_001164090.1"/>
</dbReference>
<dbReference type="RefSeq" id="NP_031556.1">
    <property type="nucleotide sequence ID" value="NM_007530.3"/>
</dbReference>
<dbReference type="SMR" id="Q61334"/>
<dbReference type="BioGRID" id="198309">
    <property type="interactions" value="1"/>
</dbReference>
<dbReference type="FunCoup" id="Q61334">
    <property type="interactions" value="1877"/>
</dbReference>
<dbReference type="IntAct" id="Q61334">
    <property type="interactions" value="2"/>
</dbReference>
<dbReference type="MINT" id="Q61334"/>
<dbReference type="STRING" id="10090.ENSMUSP00000137260"/>
<dbReference type="iPTMnet" id="Q61334"/>
<dbReference type="PhosphoSitePlus" id="Q61334"/>
<dbReference type="SwissPalm" id="Q61334"/>
<dbReference type="jPOST" id="Q61334"/>
<dbReference type="PaxDb" id="10090-ENSMUSP00000020979"/>
<dbReference type="ProteomicsDB" id="277161"/>
<dbReference type="Pumba" id="Q61334"/>
<dbReference type="TopDownProteomics" id="Q61334"/>
<dbReference type="Antibodypedia" id="17207">
    <property type="antibodies" value="299 antibodies from 32 providers"/>
</dbReference>
<dbReference type="DNASU" id="12033"/>
<dbReference type="Ensembl" id="ENSMUST00000020979.9">
    <property type="protein sequence ID" value="ENSMUSP00000020979.8"/>
    <property type="gene ID" value="ENSMUSG00000020650.16"/>
</dbReference>
<dbReference type="Ensembl" id="ENSMUST00000177962.9">
    <property type="protein sequence ID" value="ENSMUSP00000137260.2"/>
    <property type="gene ID" value="ENSMUSG00000020650.16"/>
</dbReference>
<dbReference type="GeneID" id="12033"/>
<dbReference type="KEGG" id="mmu:12033"/>
<dbReference type="UCSC" id="uc007nhp.1">
    <property type="organism name" value="mouse"/>
</dbReference>
<dbReference type="AGR" id="MGI:101917"/>
<dbReference type="CTD" id="55973"/>
<dbReference type="MGI" id="MGI:101917">
    <property type="gene designation" value="Bcap29"/>
</dbReference>
<dbReference type="VEuPathDB" id="HostDB:ENSMUSG00000020650"/>
<dbReference type="eggNOG" id="KOG1962">
    <property type="taxonomic scope" value="Eukaryota"/>
</dbReference>
<dbReference type="GeneTree" id="ENSGT00390000011863"/>
<dbReference type="HOGENOM" id="CLU_070975_1_0_1"/>
<dbReference type="InParanoid" id="Q61334"/>
<dbReference type="OMA" id="FMARFWN"/>
<dbReference type="OrthoDB" id="435607at2759"/>
<dbReference type="PhylomeDB" id="Q61334"/>
<dbReference type="TreeFam" id="TF315310"/>
<dbReference type="BioGRID-ORCS" id="12033">
    <property type="hits" value="2 hits in 77 CRISPR screens"/>
</dbReference>
<dbReference type="ChiTaRS" id="Bcap29">
    <property type="organism name" value="mouse"/>
</dbReference>
<dbReference type="PRO" id="PR:Q61334"/>
<dbReference type="Proteomes" id="UP000000589">
    <property type="component" value="Chromosome 12"/>
</dbReference>
<dbReference type="RNAct" id="Q61334">
    <property type="molecule type" value="protein"/>
</dbReference>
<dbReference type="Bgee" id="ENSMUSG00000020650">
    <property type="expression patterns" value="Expressed in spermatocyte and 265 other cell types or tissues"/>
</dbReference>
<dbReference type="ExpressionAtlas" id="Q61334">
    <property type="expression patterns" value="baseline and differential"/>
</dbReference>
<dbReference type="GO" id="GO:0005789">
    <property type="term" value="C:endoplasmic reticulum membrane"/>
    <property type="evidence" value="ECO:0007669"/>
    <property type="project" value="UniProtKB-SubCell"/>
</dbReference>
<dbReference type="GO" id="GO:0006915">
    <property type="term" value="P:apoptotic process"/>
    <property type="evidence" value="ECO:0007669"/>
    <property type="project" value="UniProtKB-KW"/>
</dbReference>
<dbReference type="GO" id="GO:0006888">
    <property type="term" value="P:endoplasmic reticulum to Golgi vesicle-mediated transport"/>
    <property type="evidence" value="ECO:0000316"/>
    <property type="project" value="MGI"/>
</dbReference>
<dbReference type="GO" id="GO:0006886">
    <property type="term" value="P:intracellular protein transport"/>
    <property type="evidence" value="ECO:0007669"/>
    <property type="project" value="InterPro"/>
</dbReference>
<dbReference type="GO" id="GO:0070973">
    <property type="term" value="P:protein localization to endoplasmic reticulum exit site"/>
    <property type="evidence" value="ECO:0000316"/>
    <property type="project" value="MGI"/>
</dbReference>
<dbReference type="FunFam" id="1.20.5.110:FF:000011">
    <property type="entry name" value="B-cell receptor-associated protein 29"/>
    <property type="match status" value="1"/>
</dbReference>
<dbReference type="Gene3D" id="1.20.5.110">
    <property type="match status" value="1"/>
</dbReference>
<dbReference type="InterPro" id="IPR008417">
    <property type="entry name" value="BAP29/BAP31"/>
</dbReference>
<dbReference type="InterPro" id="IPR040463">
    <property type="entry name" value="BAP29/BAP31_N"/>
</dbReference>
<dbReference type="InterPro" id="IPR041672">
    <property type="entry name" value="Bap31/Bap29_C"/>
</dbReference>
<dbReference type="PANTHER" id="PTHR12701:SF5">
    <property type="entry name" value="B-CELL RECEPTOR-ASSOCIATED PROTEIN 29"/>
    <property type="match status" value="1"/>
</dbReference>
<dbReference type="PANTHER" id="PTHR12701">
    <property type="entry name" value="BCR-ASSOCIATED PROTEIN, BAP"/>
    <property type="match status" value="1"/>
</dbReference>
<dbReference type="Pfam" id="PF05529">
    <property type="entry name" value="Bap31"/>
    <property type="match status" value="1"/>
</dbReference>
<dbReference type="Pfam" id="PF18035">
    <property type="entry name" value="Bap31_Bap29_C"/>
    <property type="match status" value="1"/>
</dbReference>
<gene>
    <name type="primary">Bcap29</name>
    <name type="synonym">Bap29</name>
</gene>
<sequence>MTIQWAAVASFLYAEIGLILLFCLPFIPPQRWQKIFSFSVWGKIASFWNKAFLTIIILLIILFLDAVREVRKYSSTNVVEKNSAIRPSAFEHTQMKLFRSQRNLYISGFSLFFWLVLRRLVTLITQLAKEIANKGVLKIQAENTNKAAKKFMEENEKLKLGLRNDNAEEHLLEAENKKLIESKENLKTELKKASDALLKAQNDVMTMKIQSERLSKEYDRLLKEHSELQNRLEKEKKKGL</sequence>